<organism>
    <name type="scientific">Bacillus subtilis (strain 168)</name>
    <dbReference type="NCBI Taxonomy" id="224308"/>
    <lineage>
        <taxon>Bacteria</taxon>
        <taxon>Bacillati</taxon>
        <taxon>Bacillota</taxon>
        <taxon>Bacilli</taxon>
        <taxon>Bacillales</taxon>
        <taxon>Bacillaceae</taxon>
        <taxon>Bacillus</taxon>
    </lineage>
</organism>
<comment type="function">
    <text evidence="1 4 5">Required for correct processing of both the 5' and 3' ends of 5S rRNA precursor. Cleaves both sides of a double-stranded region yielding mature 5S rRNA in one step. Releases 5'-phosphoryl and 3'-hydroxy termini.</text>
</comment>
<comment type="catalytic activity">
    <reaction evidence="1">
        <text>Endonucleolytic cleavage of RNA, removing 21 and 42 nucleotides, respectively, from the 5'- and 3'-termini of a 5S-rRNA precursor.</text>
        <dbReference type="EC" id="3.1.26.8"/>
    </reaction>
</comment>
<comment type="cofactor">
    <cofactor evidence="4">
        <name>Mg(2+)</name>
        <dbReference type="ChEBI" id="CHEBI:18420"/>
    </cofactor>
    <cofactor evidence="4">
        <name>Mn(2+)</name>
        <dbReference type="ChEBI" id="CHEBI:29035"/>
    </cofactor>
    <cofactor evidence="4">
        <name>Ca(2+)</name>
        <dbReference type="ChEBI" id="CHEBI:29108"/>
    </cofactor>
    <text evidence="4">Divalent metal cations; Mg(2+) &gt; Mn(2+) &gt; Ca(2+).</text>
</comment>
<comment type="biophysicochemical properties">
    <phDependence>
        <text evidence="4">Optimum pH is 7-8.5 at 37 degrees Celsius.</text>
    </phDependence>
</comment>
<comment type="subunit">
    <text evidence="4">Requires ribosomal protein L18 (rplR) for catalysis; it can be replaced by 30% dimethylsulfoxide suggesting L18 functions as an rRNA folding chaperone.</text>
</comment>
<comment type="subcellular location">
    <subcellularLocation>
        <location evidence="1 2 4">Cytoplasm</location>
    </subcellularLocation>
    <text>Associated with 70S ribosomes.</text>
</comment>
<comment type="disruption phenotype">
    <text evidence="2 3">Not essential. Accumulation of precursor forms of 5S rRNA in total, ribosomes and polysome RNA preparations; smaller forms (126 and 135 nucleotides) are predominantly found in ribosomes and polysomes. Each of the 10 rrn operons gives rise to a different 5S rRNA precursor due to differences in their 3' ends.</text>
</comment>
<comment type="similarity">
    <text evidence="1">Belongs to the ribonuclease M5 family.</text>
</comment>
<sequence length="186" mass="20674">MKIKEIIVVEGRDDTARIKLAVDADTIETNGSAIDDHVIDQIRLAQKTRGVIILTDPDFPGEKIRKTISEAVPGCKHAFLPKHLAKPKNKRGIGVEHASVESIRACLENVHEEMEAQPSDISAEDLIHAGLIGGPAAKCRRERLGDLLKIGYTNGKQLQKRLQMFQIKKSDFMSALDTVMREEQNE</sequence>
<keyword id="KW-0963">Cytoplasm</keyword>
<keyword id="KW-0903">Direct protein sequencing</keyword>
<keyword id="KW-0255">Endonuclease</keyword>
<keyword id="KW-0378">Hydrolase</keyword>
<keyword id="KW-0460">Magnesium</keyword>
<keyword id="KW-0479">Metal-binding</keyword>
<keyword id="KW-0540">Nuclease</keyword>
<keyword id="KW-1185">Reference proteome</keyword>
<keyword id="KW-0690">Ribosome biogenesis</keyword>
<keyword id="KW-0694">RNA-binding</keyword>
<keyword id="KW-0698">rRNA processing</keyword>
<keyword id="KW-0699">rRNA-binding</keyword>
<feature type="chain" id="PRO_0000049440" description="Ribonuclease M5">
    <location>
        <begin position="1"/>
        <end position="186"/>
    </location>
</feature>
<feature type="domain" description="Toprim" evidence="1">
    <location>
        <begin position="4"/>
        <end position="94"/>
    </location>
</feature>
<feature type="binding site" evidence="1">
    <location>
        <position position="10"/>
    </location>
    <ligand>
        <name>Mg(2+)</name>
        <dbReference type="ChEBI" id="CHEBI:18420"/>
        <label>1</label>
        <note>catalytic</note>
    </ligand>
</feature>
<feature type="binding site" evidence="1">
    <location>
        <position position="56"/>
    </location>
    <ligand>
        <name>Mg(2+)</name>
        <dbReference type="ChEBI" id="CHEBI:18420"/>
        <label>1</label>
        <note>catalytic</note>
    </ligand>
</feature>
<feature type="binding site" evidence="1">
    <location>
        <position position="56"/>
    </location>
    <ligand>
        <name>Mg(2+)</name>
        <dbReference type="ChEBI" id="CHEBI:18420"/>
        <label>2</label>
    </ligand>
</feature>
<feature type="binding site" evidence="1">
    <location>
        <position position="58"/>
    </location>
    <ligand>
        <name>Mg(2+)</name>
        <dbReference type="ChEBI" id="CHEBI:18420"/>
        <label>2</label>
    </ligand>
</feature>
<feature type="mutagenesis site" description="Loss of activity, 50% rRNA-binding." evidence="3">
    <original>E</original>
    <variation>A</variation>
    <location>
        <position position="10"/>
    </location>
</feature>
<feature type="mutagenesis site" description="30-fold loss of activity." evidence="3">
    <original>G</original>
    <variation>A</variation>
    <location>
        <position position="11"/>
    </location>
</feature>
<feature type="mutagenesis site" description="Loss of activity." evidence="3">
    <original>G</original>
    <variation>A</variation>
    <location>
        <position position="31"/>
    </location>
</feature>
<feature type="mutagenesis site" description="Loss of activity, rRNA-binding normal." evidence="3">
    <original>D</original>
    <variation>A</variation>
    <location>
        <position position="56"/>
    </location>
</feature>
<feature type="mutagenesis site" description="Loss of activity, rRNA-binding normal." evidence="3">
    <original>D</original>
    <variation>A</variation>
    <location>
        <position position="58"/>
    </location>
</feature>
<feature type="mutagenesis site" description="Loss of activity in vivo, about 100-fold loss in vitro." evidence="3">
    <original>G</original>
    <variation>A</variation>
    <location>
        <position position="61"/>
    </location>
</feature>
<feature type="mutagenesis site" description="100-fold loss of activity." evidence="3">
    <original>R</original>
    <variation>A</variation>
    <location>
        <position position="65"/>
    </location>
</feature>
<feature type="mutagenesis site" description="10-fold loss of activity." evidence="3">
    <original>L</original>
    <variation>A</variation>
    <location>
        <position position="107"/>
    </location>
</feature>
<feature type="mutagenesis site" description="Loss of activity, significant loss of rRNA binding." evidence="3">
    <location>
        <begin position="140"/>
        <end position="142"/>
    </location>
</feature>
<dbReference type="EC" id="3.1.26.8" evidence="1"/>
<dbReference type="EMBL" id="D26185">
    <property type="protein sequence ID" value="BAA05276.1"/>
    <property type="molecule type" value="Genomic_DNA"/>
</dbReference>
<dbReference type="EMBL" id="AL009126">
    <property type="protein sequence ID" value="CAB11817.1"/>
    <property type="molecule type" value="Genomic_DNA"/>
</dbReference>
<dbReference type="PIR" id="S66070">
    <property type="entry name" value="S66070"/>
</dbReference>
<dbReference type="RefSeq" id="NP_387922.1">
    <property type="nucleotide sequence ID" value="NC_000964.3"/>
</dbReference>
<dbReference type="RefSeq" id="WP_003226752.1">
    <property type="nucleotide sequence ID" value="NZ_OZ025638.1"/>
</dbReference>
<dbReference type="SMR" id="P37547"/>
<dbReference type="FunCoup" id="P37547">
    <property type="interactions" value="55"/>
</dbReference>
<dbReference type="STRING" id="224308.BSU00410"/>
<dbReference type="PaxDb" id="224308-BSU00410"/>
<dbReference type="EnsemblBacteria" id="CAB11817">
    <property type="protein sequence ID" value="CAB11817"/>
    <property type="gene ID" value="BSU_00410"/>
</dbReference>
<dbReference type="GeneID" id="937001"/>
<dbReference type="KEGG" id="bsu:BSU00410"/>
<dbReference type="PATRIC" id="fig|224308.179.peg.41"/>
<dbReference type="eggNOG" id="COG1658">
    <property type="taxonomic scope" value="Bacteria"/>
</dbReference>
<dbReference type="InParanoid" id="P37547"/>
<dbReference type="OrthoDB" id="9791329at2"/>
<dbReference type="PhylomeDB" id="P37547"/>
<dbReference type="BioCyc" id="BSUB:BSU00410-MONOMER"/>
<dbReference type="SABIO-RK" id="P37547"/>
<dbReference type="Proteomes" id="UP000001570">
    <property type="component" value="Chromosome"/>
</dbReference>
<dbReference type="GO" id="GO:0005737">
    <property type="term" value="C:cytoplasm"/>
    <property type="evidence" value="ECO:0007669"/>
    <property type="project" value="UniProtKB-SubCell"/>
</dbReference>
<dbReference type="GO" id="GO:0046872">
    <property type="term" value="F:metal ion binding"/>
    <property type="evidence" value="ECO:0007669"/>
    <property type="project" value="UniProtKB-KW"/>
</dbReference>
<dbReference type="GO" id="GO:0043822">
    <property type="term" value="F:ribonuclease M5 activity"/>
    <property type="evidence" value="ECO:0000314"/>
    <property type="project" value="UniProtKB"/>
</dbReference>
<dbReference type="GO" id="GO:0019843">
    <property type="term" value="F:rRNA binding"/>
    <property type="evidence" value="ECO:0007669"/>
    <property type="project" value="UniProtKB-KW"/>
</dbReference>
<dbReference type="GO" id="GO:0042254">
    <property type="term" value="P:ribosome biogenesis"/>
    <property type="evidence" value="ECO:0000315"/>
    <property type="project" value="UniProtKB"/>
</dbReference>
<dbReference type="GO" id="GO:0006364">
    <property type="term" value="P:rRNA processing"/>
    <property type="evidence" value="ECO:0000314"/>
    <property type="project" value="UniProtKB"/>
</dbReference>
<dbReference type="CDD" id="cd01027">
    <property type="entry name" value="TOPRIM_RNase_M5_like"/>
    <property type="match status" value="1"/>
</dbReference>
<dbReference type="FunFam" id="3.40.1360.10:FF:000006">
    <property type="entry name" value="Ribonuclease M5"/>
    <property type="match status" value="1"/>
</dbReference>
<dbReference type="Gene3D" id="3.40.1360.10">
    <property type="match status" value="1"/>
</dbReference>
<dbReference type="HAMAP" id="MF_01469">
    <property type="entry name" value="RNase_M5"/>
    <property type="match status" value="1"/>
</dbReference>
<dbReference type="InterPro" id="IPR004466">
    <property type="entry name" value="RNase_M5"/>
</dbReference>
<dbReference type="InterPro" id="IPR025156">
    <property type="entry name" value="RNase_M5_C"/>
</dbReference>
<dbReference type="InterPro" id="IPR006171">
    <property type="entry name" value="TOPRIM_dom"/>
</dbReference>
<dbReference type="InterPro" id="IPR034141">
    <property type="entry name" value="TOPRIM_RNase_M5-like"/>
</dbReference>
<dbReference type="NCBIfam" id="TIGR00334">
    <property type="entry name" value="5S_RNA_mat_M5"/>
    <property type="match status" value="1"/>
</dbReference>
<dbReference type="PANTHER" id="PTHR39156">
    <property type="entry name" value="RIBONUCLEASE M5"/>
    <property type="match status" value="1"/>
</dbReference>
<dbReference type="PANTHER" id="PTHR39156:SF1">
    <property type="entry name" value="RIBONUCLEASE M5"/>
    <property type="match status" value="1"/>
</dbReference>
<dbReference type="Pfam" id="PF13331">
    <property type="entry name" value="DUF4093"/>
    <property type="match status" value="1"/>
</dbReference>
<dbReference type="Pfam" id="PF01751">
    <property type="entry name" value="Toprim"/>
    <property type="match status" value="1"/>
</dbReference>
<dbReference type="SMART" id="SM00493">
    <property type="entry name" value="TOPRIM"/>
    <property type="match status" value="1"/>
</dbReference>
<dbReference type="SUPFAM" id="SSF110455">
    <property type="entry name" value="Toprim domain"/>
    <property type="match status" value="1"/>
</dbReference>
<dbReference type="PROSITE" id="PS50880">
    <property type="entry name" value="TOPRIM"/>
    <property type="match status" value="1"/>
</dbReference>
<gene>
    <name evidence="1" type="primary">rnmV</name>
    <name type="synonym">yabF</name>
    <name type="ordered locus">BSU00410</name>
</gene>
<proteinExistence type="evidence at protein level"/>
<accession>P37547</accession>
<reference key="1">
    <citation type="journal article" date="1994" name="DNA Res.">
        <title>Systematic sequencing of the 180 kilobase region of the Bacillus subtilis chromosome containing the replication origin.</title>
        <authorList>
            <person name="Ogasawara N."/>
            <person name="Nakai S."/>
            <person name="Yoshikawa H."/>
        </authorList>
    </citation>
    <scope>NUCLEOTIDE SEQUENCE [GENOMIC DNA]</scope>
    <source>
        <strain>168</strain>
    </source>
</reference>
<reference key="2">
    <citation type="journal article" date="1997" name="Nature">
        <title>The complete genome sequence of the Gram-positive bacterium Bacillus subtilis.</title>
        <authorList>
            <person name="Kunst F."/>
            <person name="Ogasawara N."/>
            <person name="Moszer I."/>
            <person name="Albertini A.M."/>
            <person name="Alloni G."/>
            <person name="Azevedo V."/>
            <person name="Bertero M.G."/>
            <person name="Bessieres P."/>
            <person name="Bolotin A."/>
            <person name="Borchert S."/>
            <person name="Borriss R."/>
            <person name="Boursier L."/>
            <person name="Brans A."/>
            <person name="Braun M."/>
            <person name="Brignell S.C."/>
            <person name="Bron S."/>
            <person name="Brouillet S."/>
            <person name="Bruschi C.V."/>
            <person name="Caldwell B."/>
            <person name="Capuano V."/>
            <person name="Carter N.M."/>
            <person name="Choi S.-K."/>
            <person name="Codani J.-J."/>
            <person name="Connerton I.F."/>
            <person name="Cummings N.J."/>
            <person name="Daniel R.A."/>
            <person name="Denizot F."/>
            <person name="Devine K.M."/>
            <person name="Duesterhoeft A."/>
            <person name="Ehrlich S.D."/>
            <person name="Emmerson P.T."/>
            <person name="Entian K.-D."/>
            <person name="Errington J."/>
            <person name="Fabret C."/>
            <person name="Ferrari E."/>
            <person name="Foulger D."/>
            <person name="Fritz C."/>
            <person name="Fujita M."/>
            <person name="Fujita Y."/>
            <person name="Fuma S."/>
            <person name="Galizzi A."/>
            <person name="Galleron N."/>
            <person name="Ghim S.-Y."/>
            <person name="Glaser P."/>
            <person name="Goffeau A."/>
            <person name="Golightly E.J."/>
            <person name="Grandi G."/>
            <person name="Guiseppi G."/>
            <person name="Guy B.J."/>
            <person name="Haga K."/>
            <person name="Haiech J."/>
            <person name="Harwood C.R."/>
            <person name="Henaut A."/>
            <person name="Hilbert H."/>
            <person name="Holsappel S."/>
            <person name="Hosono S."/>
            <person name="Hullo M.-F."/>
            <person name="Itaya M."/>
            <person name="Jones L.-M."/>
            <person name="Joris B."/>
            <person name="Karamata D."/>
            <person name="Kasahara Y."/>
            <person name="Klaerr-Blanchard M."/>
            <person name="Klein C."/>
            <person name="Kobayashi Y."/>
            <person name="Koetter P."/>
            <person name="Koningstein G."/>
            <person name="Krogh S."/>
            <person name="Kumano M."/>
            <person name="Kurita K."/>
            <person name="Lapidus A."/>
            <person name="Lardinois S."/>
            <person name="Lauber J."/>
            <person name="Lazarevic V."/>
            <person name="Lee S.-M."/>
            <person name="Levine A."/>
            <person name="Liu H."/>
            <person name="Masuda S."/>
            <person name="Mauel C."/>
            <person name="Medigue C."/>
            <person name="Medina N."/>
            <person name="Mellado R.P."/>
            <person name="Mizuno M."/>
            <person name="Moestl D."/>
            <person name="Nakai S."/>
            <person name="Noback M."/>
            <person name="Noone D."/>
            <person name="O'Reilly M."/>
            <person name="Ogawa K."/>
            <person name="Ogiwara A."/>
            <person name="Oudega B."/>
            <person name="Park S.-H."/>
            <person name="Parro V."/>
            <person name="Pohl T.M."/>
            <person name="Portetelle D."/>
            <person name="Porwollik S."/>
            <person name="Prescott A.M."/>
            <person name="Presecan E."/>
            <person name="Pujic P."/>
            <person name="Purnelle B."/>
            <person name="Rapoport G."/>
            <person name="Rey M."/>
            <person name="Reynolds S."/>
            <person name="Rieger M."/>
            <person name="Rivolta C."/>
            <person name="Rocha E."/>
            <person name="Roche B."/>
            <person name="Rose M."/>
            <person name="Sadaie Y."/>
            <person name="Sato T."/>
            <person name="Scanlan E."/>
            <person name="Schleich S."/>
            <person name="Schroeter R."/>
            <person name="Scoffone F."/>
            <person name="Sekiguchi J."/>
            <person name="Sekowska A."/>
            <person name="Seror S.J."/>
            <person name="Serror P."/>
            <person name="Shin B.-S."/>
            <person name="Soldo B."/>
            <person name="Sorokin A."/>
            <person name="Tacconi E."/>
            <person name="Takagi T."/>
            <person name="Takahashi H."/>
            <person name="Takemaru K."/>
            <person name="Takeuchi M."/>
            <person name="Tamakoshi A."/>
            <person name="Tanaka T."/>
            <person name="Terpstra P."/>
            <person name="Tognoni A."/>
            <person name="Tosato V."/>
            <person name="Uchiyama S."/>
            <person name="Vandenbol M."/>
            <person name="Vannier F."/>
            <person name="Vassarotti A."/>
            <person name="Viari A."/>
            <person name="Wambutt R."/>
            <person name="Wedler E."/>
            <person name="Wedler H."/>
            <person name="Weitzenegger T."/>
            <person name="Winters P."/>
            <person name="Wipat A."/>
            <person name="Yamamoto H."/>
            <person name="Yamane K."/>
            <person name="Yasumoto K."/>
            <person name="Yata K."/>
            <person name="Yoshida K."/>
            <person name="Yoshikawa H.-F."/>
            <person name="Zumstein E."/>
            <person name="Yoshikawa H."/>
            <person name="Danchin A."/>
        </authorList>
    </citation>
    <scope>NUCLEOTIDE SEQUENCE [LARGE SCALE GENOMIC DNA]</scope>
    <source>
        <strain>168</strain>
    </source>
</reference>
<reference key="3">
    <citation type="journal article" date="2001" name="RNA">
        <title>Identification of the gene encoding the 5S ribosomal RNA maturase in Bacillus subtilis: mature 5S rRNA is dispensable for ribosome function.</title>
        <authorList>
            <person name="Condon C."/>
            <person name="Brechemier-Baey D."/>
            <person name="Beltchev B."/>
            <person name="Grunberg-Manago M."/>
            <person name="Putzer H."/>
        </authorList>
    </citation>
    <scope>PROTEIN SEQUENCE OF 1-5</scope>
    <scope>IDENTIFICATION AS RNASE M5</scope>
    <scope>SUBCELLULAR LOCATION</scope>
    <scope>RIBOSOME ASSOCIATION</scope>
    <scope>DISRUPTION PHENOTYPE</scope>
    <source>
        <strain>168</strain>
    </source>
</reference>
<reference key="4">
    <citation type="journal article" date="1974" name="Nature">
        <title>In vitro maturation of precursors of 5S ribosomal RNA from Bacillus subtilis.</title>
        <authorList>
            <person name="Sogin M.L."/>
            <person name="Pace N.R."/>
        </authorList>
    </citation>
    <scope>FUNCTION AS AN ENDORIBONUCLEASE</scope>
    <source>
        <strain>168</strain>
    </source>
</reference>
<reference key="5">
    <citation type="journal article" date="1977" name="J. Biol. Chem.">
        <title>Partial purification and properties of a ribosomal RNA maturation endonuclease from Bacillus subtilis.</title>
        <authorList>
            <person name="Sogin M.L."/>
            <person name="Pace B."/>
            <person name="Pace N.R."/>
        </authorList>
    </citation>
    <scope>FUNCTION AS AN ENDORIBONUCLEASE</scope>
    <scope>PH DEPENDENCE</scope>
    <scope>COFACTOR</scope>
    <scope>SUBCELLULAR LOCATION</scope>
    <scope>RIBOSOME ASSOCIATION</scope>
    <scope>SUBUNIT</scope>
    <source>
        <strain>168</strain>
    </source>
</reference>
<reference key="6">
    <citation type="journal article" date="1984" name="J. Biol. Chem.">
        <title>The ribonucleoprotein substrate for a ribosomal RNA-processing nuclease.</title>
        <authorList>
            <person name="Stahl D.A."/>
            <person name="Pace B."/>
            <person name="Marsh T."/>
            <person name="Pace N.R."/>
        </authorList>
    </citation>
    <scope>REQUIREMENT FOR RIBOSOMAL PROTEIN L18</scope>
</reference>
<reference key="7">
    <citation type="journal article" date="2005" name="Nucleic Acids Res.">
        <title>The 5S rRNA maturase, ribonuclease M5, is a Toprim domain family member.</title>
        <authorList>
            <person name="Allemand F."/>
            <person name="Mathy N."/>
            <person name="Brechemier-Baey D."/>
            <person name="Condon C."/>
        </authorList>
    </citation>
    <scope>RRNA-BINDING</scope>
    <scope>DISRUPTION PHENOTYPE</scope>
    <scope>MUTAGENESIS OF GLU-10; GLY-11; GLY-31; ASP-56; ASP-58; GLY-61; ARG-65; LEU-107 AND 140-ARG--GLU-142</scope>
</reference>
<evidence type="ECO:0000255" key="1">
    <source>
        <dbReference type="HAMAP-Rule" id="MF_01469"/>
    </source>
</evidence>
<evidence type="ECO:0000269" key="2">
    <source>
    </source>
</evidence>
<evidence type="ECO:0000269" key="3">
    <source>
    </source>
</evidence>
<evidence type="ECO:0000269" key="4">
    <source>
    </source>
</evidence>
<evidence type="ECO:0000269" key="5">
    <source>
    </source>
</evidence>
<protein>
    <recommendedName>
        <fullName evidence="1">Ribonuclease M5</fullName>
        <ecNumber evidence="1">3.1.26.8</ecNumber>
    </recommendedName>
    <alternativeName>
        <fullName evidence="1">RNase M5</fullName>
    </alternativeName>
    <alternativeName>
        <fullName evidence="1">Ribosomal RNA terminal maturase M5</fullName>
    </alternativeName>
</protein>
<name>RNM5_BACSU</name>